<sequence length="39" mass="4395">RGCIELGEDCDGSKDDCQCCRDNGFCSCYTFPYKWGCIC</sequence>
<name>TXF22_CTEON</name>
<dbReference type="SMR" id="P85272"/>
<dbReference type="ArachnoServer" id="AS000309">
    <property type="toxin name" value="U2-ctenitoxin-Co1a"/>
</dbReference>
<dbReference type="GO" id="GO:0005576">
    <property type="term" value="C:extracellular region"/>
    <property type="evidence" value="ECO:0007669"/>
    <property type="project" value="UniProtKB-SubCell"/>
</dbReference>
<dbReference type="GO" id="GO:0005246">
    <property type="term" value="F:calcium channel regulator activity"/>
    <property type="evidence" value="ECO:0007669"/>
    <property type="project" value="UniProtKB-KW"/>
</dbReference>
<dbReference type="GO" id="GO:0090729">
    <property type="term" value="F:toxin activity"/>
    <property type="evidence" value="ECO:0007669"/>
    <property type="project" value="UniProtKB-KW"/>
</dbReference>
<dbReference type="InterPro" id="IPR005853">
    <property type="entry name" value="Omega-agatoxin_II/III_CS"/>
</dbReference>
<dbReference type="InterPro" id="IPR013605">
    <property type="entry name" value="Toxin_34"/>
</dbReference>
<dbReference type="Pfam" id="PF08396">
    <property type="entry name" value="Toxin_34"/>
    <property type="match status" value="1"/>
</dbReference>
<dbReference type="PROSITE" id="PS60023">
    <property type="entry name" value="OMEGA_AGA_II_III"/>
    <property type="match status" value="1"/>
</dbReference>
<feature type="chain" id="PRO_0000302124" description="U2-ctenitoxin-Co1a">
    <location>
        <begin position="1"/>
        <end position="39" status="greater than"/>
    </location>
</feature>
<feature type="non-terminal residue">
    <location>
        <position position="39"/>
    </location>
</feature>
<keyword id="KW-0108">Calcium channel impairing toxin</keyword>
<keyword id="KW-0903">Direct protein sequencing</keyword>
<keyword id="KW-1015">Disulfide bond</keyword>
<keyword id="KW-0872">Ion channel impairing toxin</keyword>
<keyword id="KW-0528">Neurotoxin</keyword>
<keyword id="KW-0964">Secreted</keyword>
<keyword id="KW-0800">Toxin</keyword>
<keyword id="KW-1218">Voltage-gated calcium channel impairing toxin</keyword>
<protein>
    <recommendedName>
        <fullName>U2-ctenitoxin-Co1a</fullName>
        <shortName>U2-CNTX-Co1a</shortName>
    </recommendedName>
    <alternativeName>
        <fullName>Neurotoxin Oc F22</fullName>
    </alternativeName>
</protein>
<comment type="function">
    <text evidence="1">Omega-agatoxins are antagonists of voltage-gated calcium channels (Cav).</text>
</comment>
<comment type="subcellular location">
    <subcellularLocation>
        <location evidence="3">Secreted</location>
    </subcellularLocation>
</comment>
<comment type="tissue specificity">
    <text evidence="3">Expressed by the venom gland.</text>
</comment>
<comment type="PTM">
    <text evidence="2">Disulfide bonds are present.</text>
</comment>
<comment type="mass spectrometry" mass="8926.2" error="0.21" method="Electrospray" evidence="3"/>
<comment type="similarity">
    <text evidence="4">Belongs to the neurotoxin 04 (omega-agtx) family. 03 (type II/III omega-agtx) subfamily.</text>
</comment>
<reference evidence="4" key="1">
    <citation type="submission" date="2007-07" db="UniProtKB">
        <authorList>
            <person name="Borges M.H."/>
            <person name="Oliveira C.F.B."/>
            <person name="Goncalves J.M."/>
            <person name="Rates B."/>
            <person name="Santos D.M."/>
            <person name="Pimenta A.M.C."/>
            <person name="Cordeiro M.N."/>
            <person name="Richardson M."/>
        </authorList>
    </citation>
    <scope>PROTEIN SEQUENCE</scope>
    <scope>SUBCELLULAR LOCATION</scope>
    <scope>TISSUE SPECIFICITY</scope>
    <scope>MASS SPECTROMETRY</scope>
    <source>
        <tissue>Venom</tissue>
    </source>
</reference>
<evidence type="ECO:0000250" key="1"/>
<evidence type="ECO:0000250" key="2">
    <source>
        <dbReference type="UniProtKB" id="P81790"/>
    </source>
</evidence>
<evidence type="ECO:0000269" key="3">
    <source ref="1"/>
</evidence>
<evidence type="ECO:0000305" key="4"/>
<organism>
    <name type="scientific">Ctenus ornatus</name>
    <name type="common">Brazilian spider</name>
    <name type="synonym">Oligoctenus ornatus</name>
    <dbReference type="NCBI Taxonomy" id="406443"/>
    <lineage>
        <taxon>Eukaryota</taxon>
        <taxon>Metazoa</taxon>
        <taxon>Ecdysozoa</taxon>
        <taxon>Arthropoda</taxon>
        <taxon>Chelicerata</taxon>
        <taxon>Arachnida</taxon>
        <taxon>Araneae</taxon>
        <taxon>Araneomorphae</taxon>
        <taxon>Entelegynae</taxon>
        <taxon>Lycosoidea</taxon>
        <taxon>Ctenidae</taxon>
        <taxon>Oligoctenus</taxon>
    </lineage>
</organism>
<accession>P85272</accession>
<proteinExistence type="evidence at protein level"/>